<comment type="function">
    <text evidence="5 7">Required for correct translation termination and probably involved in regulation of hypoxic gene expression in association TPA1. Inhibits replication of Brome mosaic virus.</text>
</comment>
<comment type="subunit">
    <text evidence="6">Interacts with STM1.</text>
</comment>
<comment type="subcellular location">
    <subcellularLocation>
        <location evidence="2 3">Nucleus</location>
    </subcellularLocation>
</comment>
<comment type="miscellaneous">
    <text evidence="4">Present with 10800 molecules/cell in log phase SD medium.</text>
</comment>
<comment type="similarity">
    <text evidence="8">Belongs to the ETT1 family.</text>
</comment>
<accession>Q08421</accession>
<accession>D6W2B6</accession>
<accession>O00016</accession>
<accession>Q6Q5I2</accession>
<keyword id="KW-0539">Nucleus</keyword>
<keyword id="KW-0597">Phosphoprotein</keyword>
<keyword id="KW-1185">Reference proteome</keyword>
<keyword id="KW-0804">Transcription</keyword>
<keyword id="KW-0805">Transcription regulation</keyword>
<keyword id="KW-0810">Translation regulation</keyword>
<proteinExistence type="evidence at protein level"/>
<organism>
    <name type="scientific">Saccharomyces cerevisiae (strain ATCC 204508 / S288c)</name>
    <name type="common">Baker's yeast</name>
    <dbReference type="NCBI Taxonomy" id="559292"/>
    <lineage>
        <taxon>Eukaryota</taxon>
        <taxon>Fungi</taxon>
        <taxon>Dikarya</taxon>
        <taxon>Ascomycota</taxon>
        <taxon>Saccharomycotina</taxon>
        <taxon>Saccharomycetes</taxon>
        <taxon>Saccharomycetales</taxon>
        <taxon>Saccharomycetaceae</taxon>
        <taxon>Saccharomyces</taxon>
    </lineage>
</organism>
<name>ETT1_YEAST</name>
<evidence type="ECO:0000256" key="1">
    <source>
        <dbReference type="SAM" id="MobiDB-lite"/>
    </source>
</evidence>
<evidence type="ECO:0000269" key="2">
    <source>
    </source>
</evidence>
<evidence type="ECO:0000269" key="3">
    <source>
    </source>
</evidence>
<evidence type="ECO:0000269" key="4">
    <source>
    </source>
</evidence>
<evidence type="ECO:0000269" key="5">
    <source>
    </source>
</evidence>
<evidence type="ECO:0000269" key="6">
    <source>
    </source>
</evidence>
<evidence type="ECO:0000269" key="7">
    <source>
    </source>
</evidence>
<evidence type="ECO:0000305" key="8"/>
<evidence type="ECO:0007744" key="9">
    <source>
    </source>
</evidence>
<feature type="chain" id="PRO_0000245279" description="Enhancer of translation termination 1">
    <location>
        <begin position="1"/>
        <end position="412"/>
    </location>
</feature>
<feature type="region of interest" description="Disordered" evidence="1">
    <location>
        <begin position="1"/>
        <end position="45"/>
    </location>
</feature>
<feature type="compositionally biased region" description="Basic and acidic residues" evidence="1">
    <location>
        <begin position="17"/>
        <end position="31"/>
    </location>
</feature>
<feature type="compositionally biased region" description="Polar residues" evidence="1">
    <location>
        <begin position="32"/>
        <end position="41"/>
    </location>
</feature>
<feature type="modified residue" description="Phosphoserine" evidence="9">
    <location>
        <position position="30"/>
    </location>
</feature>
<feature type="sequence conflict" description="In Ref. 4; AAS56371." evidence="8" ref="4">
    <original>K</original>
    <variation>E</variation>
    <location>
        <position position="338"/>
    </location>
</feature>
<reference key="1">
    <citation type="journal article" date="1997" name="Yeast">
        <title>The sequence of a 54.7 kb fragment of yeast chromosome XV reveals the presence of two tRNAs and 24 new open reading frames.</title>
        <authorList>
            <person name="Valens M."/>
            <person name="Bohn C."/>
            <person name="Daignan-Fornier B."/>
            <person name="Dang V.-D."/>
            <person name="Bolotin-Fukuhara M."/>
        </authorList>
    </citation>
    <scope>NUCLEOTIDE SEQUENCE [GENOMIC DNA]</scope>
    <source>
        <strain>ATCC 96604 / S288c / FY1679</strain>
    </source>
</reference>
<reference key="2">
    <citation type="journal article" date="1997" name="Nature">
        <title>The nucleotide sequence of Saccharomyces cerevisiae chromosome XV.</title>
        <authorList>
            <person name="Dujon B."/>
            <person name="Albermann K."/>
            <person name="Aldea M."/>
            <person name="Alexandraki D."/>
            <person name="Ansorge W."/>
            <person name="Arino J."/>
            <person name="Benes V."/>
            <person name="Bohn C."/>
            <person name="Bolotin-Fukuhara M."/>
            <person name="Bordonne R."/>
            <person name="Boyer J."/>
            <person name="Camasses A."/>
            <person name="Casamayor A."/>
            <person name="Casas C."/>
            <person name="Cheret G."/>
            <person name="Cziepluch C."/>
            <person name="Daignan-Fornier B."/>
            <person name="Dang V.-D."/>
            <person name="de Haan M."/>
            <person name="Delius H."/>
            <person name="Durand P."/>
            <person name="Fairhead C."/>
            <person name="Feldmann H."/>
            <person name="Gaillon L."/>
            <person name="Galisson F."/>
            <person name="Gamo F.-J."/>
            <person name="Gancedo C."/>
            <person name="Goffeau A."/>
            <person name="Goulding S.E."/>
            <person name="Grivell L.A."/>
            <person name="Habbig B."/>
            <person name="Hand N.J."/>
            <person name="Hani J."/>
            <person name="Hattenhorst U."/>
            <person name="Hebling U."/>
            <person name="Hernando Y."/>
            <person name="Herrero E."/>
            <person name="Heumann K."/>
            <person name="Hiesel R."/>
            <person name="Hilger F."/>
            <person name="Hofmann B."/>
            <person name="Hollenberg C.P."/>
            <person name="Hughes B."/>
            <person name="Jauniaux J.-C."/>
            <person name="Kalogeropoulos A."/>
            <person name="Katsoulou C."/>
            <person name="Kordes E."/>
            <person name="Lafuente M.J."/>
            <person name="Landt O."/>
            <person name="Louis E.J."/>
            <person name="Maarse A.C."/>
            <person name="Madania A."/>
            <person name="Mannhaupt G."/>
            <person name="Marck C."/>
            <person name="Martin R.P."/>
            <person name="Mewes H.-W."/>
            <person name="Michaux G."/>
            <person name="Paces V."/>
            <person name="Parle-McDermott A.G."/>
            <person name="Pearson B.M."/>
            <person name="Perrin A."/>
            <person name="Pettersson B."/>
            <person name="Poch O."/>
            <person name="Pohl T.M."/>
            <person name="Poirey R."/>
            <person name="Portetelle D."/>
            <person name="Pujol A."/>
            <person name="Purnelle B."/>
            <person name="Ramezani Rad M."/>
            <person name="Rechmann S."/>
            <person name="Schwager C."/>
            <person name="Schweizer M."/>
            <person name="Sor F."/>
            <person name="Sterky F."/>
            <person name="Tarassov I.A."/>
            <person name="Teodoru C."/>
            <person name="Tettelin H."/>
            <person name="Thierry A."/>
            <person name="Tobiasch E."/>
            <person name="Tzermia M."/>
            <person name="Uhlen M."/>
            <person name="Unseld M."/>
            <person name="Valens M."/>
            <person name="Vandenbol M."/>
            <person name="Vetter I."/>
            <person name="Vlcek C."/>
            <person name="Voet M."/>
            <person name="Volckaert G."/>
            <person name="Voss H."/>
            <person name="Wambutt R."/>
            <person name="Wedler H."/>
            <person name="Wiemann S."/>
            <person name="Winsor B."/>
            <person name="Wolfe K.H."/>
            <person name="Zollner A."/>
            <person name="Zumstein E."/>
            <person name="Kleine K."/>
        </authorList>
    </citation>
    <scope>NUCLEOTIDE SEQUENCE [LARGE SCALE GENOMIC DNA]</scope>
    <source>
        <strain>ATCC 204508 / S288c</strain>
    </source>
</reference>
<reference key="3">
    <citation type="journal article" date="2014" name="G3 (Bethesda)">
        <title>The reference genome sequence of Saccharomyces cerevisiae: Then and now.</title>
        <authorList>
            <person name="Engel S.R."/>
            <person name="Dietrich F.S."/>
            <person name="Fisk D.G."/>
            <person name="Binkley G."/>
            <person name="Balakrishnan R."/>
            <person name="Costanzo M.C."/>
            <person name="Dwight S.S."/>
            <person name="Hitz B.C."/>
            <person name="Karra K."/>
            <person name="Nash R.S."/>
            <person name="Weng S."/>
            <person name="Wong E.D."/>
            <person name="Lloyd P."/>
            <person name="Skrzypek M.S."/>
            <person name="Miyasato S.R."/>
            <person name="Simison M."/>
            <person name="Cherry J.M."/>
        </authorList>
    </citation>
    <scope>GENOME REANNOTATION</scope>
    <source>
        <strain>ATCC 204508 / S288c</strain>
    </source>
</reference>
<reference key="4">
    <citation type="journal article" date="2007" name="Genome Res.">
        <title>Approaching a complete repository of sequence-verified protein-encoding clones for Saccharomyces cerevisiae.</title>
        <authorList>
            <person name="Hu Y."/>
            <person name="Rolfs A."/>
            <person name="Bhullar B."/>
            <person name="Murthy T.V.S."/>
            <person name="Zhu C."/>
            <person name="Berger M.F."/>
            <person name="Camargo A.A."/>
            <person name="Kelley F."/>
            <person name="McCarron S."/>
            <person name="Jepson D."/>
            <person name="Richardson A."/>
            <person name="Raphael J."/>
            <person name="Moreira D."/>
            <person name="Taycher E."/>
            <person name="Zuo D."/>
            <person name="Mohr S."/>
            <person name="Kane M.F."/>
            <person name="Williamson J."/>
            <person name="Simpson A.J.G."/>
            <person name="Bulyk M.L."/>
            <person name="Harlow E."/>
            <person name="Marsischky G."/>
            <person name="Kolodner R.D."/>
            <person name="LaBaer J."/>
        </authorList>
    </citation>
    <scope>NUCLEOTIDE SEQUENCE [GENOMIC DNA]</scope>
    <source>
        <strain>ATCC 204508 / S288c</strain>
    </source>
</reference>
<reference key="5">
    <citation type="journal article" date="2000" name="J. Cell Biol.">
        <title>The yeast nuclear pore complex: composition, architecture, and transport mechanism.</title>
        <authorList>
            <person name="Rout M.P."/>
            <person name="Aitchison J.D."/>
            <person name="Suprapto A."/>
            <person name="Hjertaas K."/>
            <person name="Zhao Y."/>
            <person name="Chait B.T."/>
        </authorList>
    </citation>
    <scope>SUBCELLULAR LOCATION</scope>
    <scope>IDENTIFICATION BY MASS SPECTROMETRY</scope>
</reference>
<reference key="6">
    <citation type="journal article" date="2003" name="Nature">
        <title>Global analysis of protein localization in budding yeast.</title>
        <authorList>
            <person name="Huh W.-K."/>
            <person name="Falvo J.V."/>
            <person name="Gerke L.C."/>
            <person name="Carroll A.S."/>
            <person name="Howson R.W."/>
            <person name="Weissman J.S."/>
            <person name="O'Shea E.K."/>
        </authorList>
    </citation>
    <scope>SUBCELLULAR LOCATION [LARGE SCALE ANALYSIS]</scope>
</reference>
<reference key="7">
    <citation type="journal article" date="2003" name="Nature">
        <title>Global analysis of protein expression in yeast.</title>
        <authorList>
            <person name="Ghaemmaghami S."/>
            <person name="Huh W.-K."/>
            <person name="Bower K."/>
            <person name="Howson R.W."/>
            <person name="Belle A."/>
            <person name="Dephoure N."/>
            <person name="O'Shea E.K."/>
            <person name="Weissman J.S."/>
        </authorList>
    </citation>
    <scope>LEVEL OF PROTEIN EXPRESSION [LARGE SCALE ANALYSIS]</scope>
</reference>
<reference key="8">
    <citation type="journal article" date="2003" name="Proc. Natl. Acad. Sci. U.S.A.">
        <title>Systematic, genome-wide identification of host genes affecting replication of a positive-strand RNA virus.</title>
        <authorList>
            <person name="Kushner D.B."/>
            <person name="Lindenbach B.D."/>
            <person name="Grdzelishvili V.Z."/>
            <person name="Noueiry A.O."/>
            <person name="Paul S.M."/>
            <person name="Ahlquist P."/>
        </authorList>
    </citation>
    <scope>FUNCTION</scope>
</reference>
<reference key="9">
    <citation type="journal article" date="2004" name="J. Biol. Chem.">
        <title>Stm1p, a G4 quadruplex and purine motif triplex nucleic acid-binding protein, interacts with ribosomes and subtelomeric Y' DNA in Saccharomyces cerevisiae.</title>
        <authorList>
            <person name="Van Dyke M.W."/>
            <person name="Nelson L.D."/>
            <person name="Weilbaecher R.G."/>
            <person name="Mehta D.V."/>
        </authorList>
    </citation>
    <scope>INTERACTION WITH STM1</scope>
    <scope>IDENTIFICATION BY MASS SPECTROMETRY</scope>
</reference>
<reference key="10">
    <citation type="journal article" date="2008" name="Mol. Cell. Proteomics">
        <title>A multidimensional chromatography technology for in-depth phosphoproteome analysis.</title>
        <authorList>
            <person name="Albuquerque C.P."/>
            <person name="Smolka M.B."/>
            <person name="Payne S.H."/>
            <person name="Bafna V."/>
            <person name="Eng J."/>
            <person name="Zhou H."/>
        </authorList>
    </citation>
    <scope>PHOSPHORYLATION [LARGE SCALE ANALYSIS] AT SER-30</scope>
    <scope>IDENTIFICATION BY MASS SPECTROMETRY [LARGE SCALE ANALYSIS]</scope>
</reference>
<reference key="11">
    <citation type="journal article" date="2009" name="Science">
        <title>Global analysis of Cdk1 substrate phosphorylation sites provides insights into evolution.</title>
        <authorList>
            <person name="Holt L.J."/>
            <person name="Tuch B.B."/>
            <person name="Villen J."/>
            <person name="Johnson A.D."/>
            <person name="Gygi S.P."/>
            <person name="Morgan D.O."/>
        </authorList>
    </citation>
    <scope>IDENTIFICATION BY MASS SPECTROMETRY [LARGE SCALE ANALYSIS]</scope>
</reference>
<reference key="12">
    <citation type="journal article" date="2010" name="J. Biol. Chem.">
        <title>Structural and functional insights into Saccharomyces cerevisiae Tpa1, a putative prolylhydroxylase influencing translation termination and transcription.</title>
        <authorList>
            <person name="Henri J."/>
            <person name="Rispal D."/>
            <person name="Bayart E."/>
            <person name="van Tilbeurgh H."/>
            <person name="Seraphin B."/>
            <person name="Graille M."/>
        </authorList>
    </citation>
    <scope>FUNCTION</scope>
</reference>
<dbReference type="EMBL" id="Z70678">
    <property type="protein sequence ID" value="CAA94536.1"/>
    <property type="molecule type" value="Genomic_DNA"/>
</dbReference>
<dbReference type="EMBL" id="Z74959">
    <property type="protein sequence ID" value="CAA99243.1"/>
    <property type="molecule type" value="Genomic_DNA"/>
</dbReference>
<dbReference type="EMBL" id="AY558045">
    <property type="protein sequence ID" value="AAS56371.1"/>
    <property type="molecule type" value="Genomic_DNA"/>
</dbReference>
<dbReference type="EMBL" id="BK006948">
    <property type="protein sequence ID" value="DAA10832.1"/>
    <property type="molecule type" value="Genomic_DNA"/>
</dbReference>
<dbReference type="PIR" id="S66925">
    <property type="entry name" value="S66925"/>
</dbReference>
<dbReference type="RefSeq" id="NP_014694.1">
    <property type="nucleotide sequence ID" value="NM_001183470.1"/>
</dbReference>
<dbReference type="SMR" id="Q08421"/>
<dbReference type="BioGRID" id="34451">
    <property type="interactions" value="74"/>
</dbReference>
<dbReference type="DIP" id="DIP-2852N"/>
<dbReference type="FunCoup" id="Q08421">
    <property type="interactions" value="155"/>
</dbReference>
<dbReference type="IntAct" id="Q08421">
    <property type="interactions" value="5"/>
</dbReference>
<dbReference type="MINT" id="Q08421"/>
<dbReference type="STRING" id="4932.YOR051C"/>
<dbReference type="iPTMnet" id="Q08421"/>
<dbReference type="PaxDb" id="4932-YOR051C"/>
<dbReference type="PeptideAtlas" id="Q08421"/>
<dbReference type="EnsemblFungi" id="YOR051C_mRNA">
    <property type="protein sequence ID" value="YOR051C"/>
    <property type="gene ID" value="YOR051C"/>
</dbReference>
<dbReference type="GeneID" id="854216"/>
<dbReference type="KEGG" id="sce:YOR051C"/>
<dbReference type="AGR" id="SGD:S000005577"/>
<dbReference type="SGD" id="S000005577">
    <property type="gene designation" value="ETT1"/>
</dbReference>
<dbReference type="VEuPathDB" id="FungiDB:YOR051C"/>
<dbReference type="eggNOG" id="ENOG502QPHX">
    <property type="taxonomic scope" value="Eukaryota"/>
</dbReference>
<dbReference type="HOGENOM" id="CLU_050427_0_0_1"/>
<dbReference type="InParanoid" id="Q08421"/>
<dbReference type="OMA" id="GIVHECD"/>
<dbReference type="OrthoDB" id="5598057at2759"/>
<dbReference type="BioCyc" id="YEAST:G3O-33594-MONOMER"/>
<dbReference type="BioGRID-ORCS" id="854216">
    <property type="hits" value="0 hits in 10 CRISPR screens"/>
</dbReference>
<dbReference type="CD-CODE" id="BDAE0F88">
    <property type="entry name" value="Nucleolus"/>
</dbReference>
<dbReference type="PRO" id="PR:Q08421"/>
<dbReference type="Proteomes" id="UP000002311">
    <property type="component" value="Chromosome XV"/>
</dbReference>
<dbReference type="RNAct" id="Q08421">
    <property type="molecule type" value="protein"/>
</dbReference>
<dbReference type="GO" id="GO:0005634">
    <property type="term" value="C:nucleus"/>
    <property type="evidence" value="ECO:0000314"/>
    <property type="project" value="SGD"/>
</dbReference>
<dbReference type="GO" id="GO:2000640">
    <property type="term" value="P:positive regulation of SREBP signaling pathway"/>
    <property type="evidence" value="ECO:0000318"/>
    <property type="project" value="GO_Central"/>
</dbReference>
<dbReference type="GO" id="GO:0006417">
    <property type="term" value="P:regulation of translation"/>
    <property type="evidence" value="ECO:0007669"/>
    <property type="project" value="UniProtKB-KW"/>
</dbReference>
<dbReference type="GO" id="GO:0006415">
    <property type="term" value="P:translational termination"/>
    <property type="evidence" value="ECO:0000315"/>
    <property type="project" value="SGD"/>
</dbReference>
<dbReference type="Gene3D" id="1.25.40.10">
    <property type="entry name" value="Tetratricopeptide repeat domain"/>
    <property type="match status" value="1"/>
</dbReference>
<dbReference type="InterPro" id="IPR024318">
    <property type="entry name" value="Nro1/ETT1"/>
</dbReference>
<dbReference type="InterPro" id="IPR011990">
    <property type="entry name" value="TPR-like_helical_dom_sf"/>
</dbReference>
<dbReference type="PANTHER" id="PTHR28290">
    <property type="entry name" value="ENHANCER OF TRANSLATION TERMINATION 1"/>
    <property type="match status" value="1"/>
</dbReference>
<dbReference type="PANTHER" id="PTHR28290:SF1">
    <property type="entry name" value="ENHANCER OF TRANSLATION TERMINATION 1"/>
    <property type="match status" value="1"/>
</dbReference>
<dbReference type="Pfam" id="PF12753">
    <property type="entry name" value="Nro1"/>
    <property type="match status" value="1"/>
</dbReference>
<sequence>MAKRPLGLGKQSREKKRKVESVEKKSDEPSRESTPVRSQMSVELDDDADLDDELAQLKGLWSKYFHSDRDDEYVLNGIVHECDRLLRLSEEDKEIKKTLNDIFHGIYALALSELTIFKAGDEEATEEKRKKDVSSFFESAIERVELGLSHFPESQFLKLVLAKIIFQRIPLEYISNLHLKSKDKKLDLVGQLEHGKKHFSIYENDTEFTFEILQMVNDLLDIVENFGREQSIQEGIDSDNEEEEELIDIELEPEHPVYPLQQSLEANYEWLRNHFDKLLDNTNTDVKIYASIANTLGELYLKKAEEPSKVFLSLQYDDGGSEKVSDKEAKNAQETALKHTKKALEYLEKAKLEDDPDTWVQVAEAYIDLGNLLDNESAEQEEAYKTAEEILGKANKASHGKFQDVLDNFLQG</sequence>
<protein>
    <recommendedName>
        <fullName>Enhancer of translation termination 1</fullName>
    </recommendedName>
</protein>
<gene>
    <name type="primary">ETT1</name>
    <name type="ordered locus">YOR051C</name>
    <name type="ORF">YOR29-02</name>
</gene>